<protein>
    <recommendedName>
        <fullName>Odorant receptor 63a</fullName>
    </recommendedName>
</protein>
<sequence length="420" mass="49611">MYSPEEAAELKRRNYRSIREMIRLSYTVGFNLLDPSRCGQVLRIWTIVLSVSSLASLYGHWQMLARYIHDIPRIGETAGTALQFLTSIAKMWYFLFAHRQIYELLRKARCHELLQKCELFERMSDLPVIKEIRQQVESTMNRYWASTRRQILIYLYSCICITTNYFINSFVINLYRYFTKPKGSYDIMLPLPSLYPAWEHKGLEFPYYHIQMYLETCSLYICGMCAVSFDGVFIVLCLHSVGLMRSLNQMVEQATSELVPPDRRVEYLRCCIYQYQRVANFATEVNNCFRHITFTQFLLSLFNWGLALFQMSVGLGNNSSITMIRMTMYLVAAGYQIVVYCYNGQRFATASEEIANAFYQVRWYGESREFRHLIRMMLMRTNRGFRLDVSWFMQMSLPTLMAMVRTSGQYFLLLQNVNQK</sequence>
<organism>
    <name type="scientific">Drosophila melanogaster</name>
    <name type="common">Fruit fly</name>
    <dbReference type="NCBI Taxonomy" id="7227"/>
    <lineage>
        <taxon>Eukaryota</taxon>
        <taxon>Metazoa</taxon>
        <taxon>Ecdysozoa</taxon>
        <taxon>Arthropoda</taxon>
        <taxon>Hexapoda</taxon>
        <taxon>Insecta</taxon>
        <taxon>Pterygota</taxon>
        <taxon>Neoptera</taxon>
        <taxon>Endopterygota</taxon>
        <taxon>Diptera</taxon>
        <taxon>Brachycera</taxon>
        <taxon>Muscomorpha</taxon>
        <taxon>Ephydroidea</taxon>
        <taxon>Drosophilidae</taxon>
        <taxon>Drosophila</taxon>
        <taxon>Sophophora</taxon>
    </lineage>
</organism>
<dbReference type="EMBL" id="AE014296">
    <property type="protein sequence ID" value="AAF47697.2"/>
    <property type="molecule type" value="Genomic_DNA"/>
</dbReference>
<dbReference type="RefSeq" id="NP_523895.2">
    <property type="nucleotide sequence ID" value="NM_079171.4"/>
</dbReference>
<dbReference type="SMR" id="Q9VZW8"/>
<dbReference type="FunCoup" id="Q9VZW8">
    <property type="interactions" value="6"/>
</dbReference>
<dbReference type="STRING" id="7227.FBpp0072847"/>
<dbReference type="GlyCosmos" id="Q9VZW8">
    <property type="glycosylation" value="1 site, No reported glycans"/>
</dbReference>
<dbReference type="GlyGen" id="Q9VZW8">
    <property type="glycosylation" value="1 site"/>
</dbReference>
<dbReference type="PaxDb" id="7227-FBpp0072847"/>
<dbReference type="EnsemblMetazoa" id="FBtr0072977">
    <property type="protein sequence ID" value="FBpp0072847"/>
    <property type="gene ID" value="FBgn0035382"/>
</dbReference>
<dbReference type="GeneID" id="38354"/>
<dbReference type="KEGG" id="dme:Dmel_CG9969"/>
<dbReference type="AGR" id="FB:FBgn0035382"/>
<dbReference type="CTD" id="38354"/>
<dbReference type="FlyBase" id="FBgn0035382">
    <property type="gene designation" value="Or63a"/>
</dbReference>
<dbReference type="VEuPathDB" id="VectorBase:FBgn0035382"/>
<dbReference type="eggNOG" id="ENOG502SWA1">
    <property type="taxonomic scope" value="Eukaryota"/>
</dbReference>
<dbReference type="GeneTree" id="ENSGT00940000166470"/>
<dbReference type="HOGENOM" id="CLU_650953_0_0_1"/>
<dbReference type="InParanoid" id="Q9VZW8"/>
<dbReference type="OMA" id="FRLDVSW"/>
<dbReference type="OrthoDB" id="6617147at2759"/>
<dbReference type="PhylomeDB" id="Q9VZW8"/>
<dbReference type="BioGRID-ORCS" id="38354">
    <property type="hits" value="0 hits in 1 CRISPR screen"/>
</dbReference>
<dbReference type="GenomeRNAi" id="38354"/>
<dbReference type="PRO" id="PR:Q9VZW8"/>
<dbReference type="Proteomes" id="UP000000803">
    <property type="component" value="Chromosome 3L"/>
</dbReference>
<dbReference type="Bgee" id="FBgn0035382">
    <property type="expression patterns" value="Expressed in adult dopaminergic neuron in brain and 14 other cell types or tissues"/>
</dbReference>
<dbReference type="ExpressionAtlas" id="Q9VZW8">
    <property type="expression patterns" value="baseline and differential"/>
</dbReference>
<dbReference type="GO" id="GO:0034703">
    <property type="term" value="C:cation channel complex"/>
    <property type="evidence" value="ECO:0000250"/>
    <property type="project" value="FlyBase"/>
</dbReference>
<dbReference type="GO" id="GO:0032590">
    <property type="term" value="C:dendrite membrane"/>
    <property type="evidence" value="ECO:0000250"/>
    <property type="project" value="FlyBase"/>
</dbReference>
<dbReference type="GO" id="GO:0005886">
    <property type="term" value="C:plasma membrane"/>
    <property type="evidence" value="ECO:0000250"/>
    <property type="project" value="FlyBase"/>
</dbReference>
<dbReference type="GO" id="GO:0170020">
    <property type="term" value="F:ionotropic olfactory receptor activity"/>
    <property type="evidence" value="ECO:0000250"/>
    <property type="project" value="FlyBase"/>
</dbReference>
<dbReference type="GO" id="GO:0005549">
    <property type="term" value="F:odorant binding"/>
    <property type="evidence" value="ECO:0000250"/>
    <property type="project" value="FlyBase"/>
</dbReference>
<dbReference type="GO" id="GO:0004984">
    <property type="term" value="F:olfactory receptor activity"/>
    <property type="evidence" value="ECO:0000318"/>
    <property type="project" value="GO_Central"/>
</dbReference>
<dbReference type="GO" id="GO:0050911">
    <property type="term" value="P:detection of chemical stimulus involved in sensory perception of smell"/>
    <property type="evidence" value="ECO:0000250"/>
    <property type="project" value="FlyBase"/>
</dbReference>
<dbReference type="GO" id="GO:0007165">
    <property type="term" value="P:signal transduction"/>
    <property type="evidence" value="ECO:0007669"/>
    <property type="project" value="UniProtKB-KW"/>
</dbReference>
<dbReference type="InterPro" id="IPR004117">
    <property type="entry name" value="7tm6_olfct_rcpt"/>
</dbReference>
<dbReference type="PANTHER" id="PTHR21137">
    <property type="entry name" value="ODORANT RECEPTOR"/>
    <property type="match status" value="1"/>
</dbReference>
<dbReference type="PANTHER" id="PTHR21137:SF35">
    <property type="entry name" value="ODORANT RECEPTOR 19A-RELATED"/>
    <property type="match status" value="1"/>
</dbReference>
<dbReference type="Pfam" id="PF02949">
    <property type="entry name" value="7tm_6"/>
    <property type="match status" value="1"/>
</dbReference>
<proteinExistence type="inferred from homology"/>
<gene>
    <name type="primary">Or63a</name>
    <name type="ORF">CG9969</name>
</gene>
<reference key="1">
    <citation type="journal article" date="2000" name="Science">
        <title>The genome sequence of Drosophila melanogaster.</title>
        <authorList>
            <person name="Adams M.D."/>
            <person name="Celniker S.E."/>
            <person name="Holt R.A."/>
            <person name="Evans C.A."/>
            <person name="Gocayne J.D."/>
            <person name="Amanatides P.G."/>
            <person name="Scherer S.E."/>
            <person name="Li P.W."/>
            <person name="Hoskins R.A."/>
            <person name="Galle R.F."/>
            <person name="George R.A."/>
            <person name="Lewis S.E."/>
            <person name="Richards S."/>
            <person name="Ashburner M."/>
            <person name="Henderson S.N."/>
            <person name="Sutton G.G."/>
            <person name="Wortman J.R."/>
            <person name="Yandell M.D."/>
            <person name="Zhang Q."/>
            <person name="Chen L.X."/>
            <person name="Brandon R.C."/>
            <person name="Rogers Y.-H.C."/>
            <person name="Blazej R.G."/>
            <person name="Champe M."/>
            <person name="Pfeiffer B.D."/>
            <person name="Wan K.H."/>
            <person name="Doyle C."/>
            <person name="Baxter E.G."/>
            <person name="Helt G."/>
            <person name="Nelson C.R."/>
            <person name="Miklos G.L.G."/>
            <person name="Abril J.F."/>
            <person name="Agbayani A."/>
            <person name="An H.-J."/>
            <person name="Andrews-Pfannkoch C."/>
            <person name="Baldwin D."/>
            <person name="Ballew R.M."/>
            <person name="Basu A."/>
            <person name="Baxendale J."/>
            <person name="Bayraktaroglu L."/>
            <person name="Beasley E.M."/>
            <person name="Beeson K.Y."/>
            <person name="Benos P.V."/>
            <person name="Berman B.P."/>
            <person name="Bhandari D."/>
            <person name="Bolshakov S."/>
            <person name="Borkova D."/>
            <person name="Botchan M.R."/>
            <person name="Bouck J."/>
            <person name="Brokstein P."/>
            <person name="Brottier P."/>
            <person name="Burtis K.C."/>
            <person name="Busam D.A."/>
            <person name="Butler H."/>
            <person name="Cadieu E."/>
            <person name="Center A."/>
            <person name="Chandra I."/>
            <person name="Cherry J.M."/>
            <person name="Cawley S."/>
            <person name="Dahlke C."/>
            <person name="Davenport L.B."/>
            <person name="Davies P."/>
            <person name="de Pablos B."/>
            <person name="Delcher A."/>
            <person name="Deng Z."/>
            <person name="Mays A.D."/>
            <person name="Dew I."/>
            <person name="Dietz S.M."/>
            <person name="Dodson K."/>
            <person name="Doup L.E."/>
            <person name="Downes M."/>
            <person name="Dugan-Rocha S."/>
            <person name="Dunkov B.C."/>
            <person name="Dunn P."/>
            <person name="Durbin K.J."/>
            <person name="Evangelista C.C."/>
            <person name="Ferraz C."/>
            <person name="Ferriera S."/>
            <person name="Fleischmann W."/>
            <person name="Fosler C."/>
            <person name="Gabrielian A.E."/>
            <person name="Garg N.S."/>
            <person name="Gelbart W.M."/>
            <person name="Glasser K."/>
            <person name="Glodek A."/>
            <person name="Gong F."/>
            <person name="Gorrell J.H."/>
            <person name="Gu Z."/>
            <person name="Guan P."/>
            <person name="Harris M."/>
            <person name="Harris N.L."/>
            <person name="Harvey D.A."/>
            <person name="Heiman T.J."/>
            <person name="Hernandez J.R."/>
            <person name="Houck J."/>
            <person name="Hostin D."/>
            <person name="Houston K.A."/>
            <person name="Howland T.J."/>
            <person name="Wei M.-H."/>
            <person name="Ibegwam C."/>
            <person name="Jalali M."/>
            <person name="Kalush F."/>
            <person name="Karpen G.H."/>
            <person name="Ke Z."/>
            <person name="Kennison J.A."/>
            <person name="Ketchum K.A."/>
            <person name="Kimmel B.E."/>
            <person name="Kodira C.D."/>
            <person name="Kraft C.L."/>
            <person name="Kravitz S."/>
            <person name="Kulp D."/>
            <person name="Lai Z."/>
            <person name="Lasko P."/>
            <person name="Lei Y."/>
            <person name="Levitsky A.A."/>
            <person name="Li J.H."/>
            <person name="Li Z."/>
            <person name="Liang Y."/>
            <person name="Lin X."/>
            <person name="Liu X."/>
            <person name="Mattei B."/>
            <person name="McIntosh T.C."/>
            <person name="McLeod M.P."/>
            <person name="McPherson D."/>
            <person name="Merkulov G."/>
            <person name="Milshina N.V."/>
            <person name="Mobarry C."/>
            <person name="Morris J."/>
            <person name="Moshrefi A."/>
            <person name="Mount S.M."/>
            <person name="Moy M."/>
            <person name="Murphy B."/>
            <person name="Murphy L."/>
            <person name="Muzny D.M."/>
            <person name="Nelson D.L."/>
            <person name="Nelson D.R."/>
            <person name="Nelson K.A."/>
            <person name="Nixon K."/>
            <person name="Nusskern D.R."/>
            <person name="Pacleb J.M."/>
            <person name="Palazzolo M."/>
            <person name="Pittman G.S."/>
            <person name="Pan S."/>
            <person name="Pollard J."/>
            <person name="Puri V."/>
            <person name="Reese M.G."/>
            <person name="Reinert K."/>
            <person name="Remington K."/>
            <person name="Saunders R.D.C."/>
            <person name="Scheeler F."/>
            <person name="Shen H."/>
            <person name="Shue B.C."/>
            <person name="Siden-Kiamos I."/>
            <person name="Simpson M."/>
            <person name="Skupski M.P."/>
            <person name="Smith T.J."/>
            <person name="Spier E."/>
            <person name="Spradling A.C."/>
            <person name="Stapleton M."/>
            <person name="Strong R."/>
            <person name="Sun E."/>
            <person name="Svirskas R."/>
            <person name="Tector C."/>
            <person name="Turner R."/>
            <person name="Venter E."/>
            <person name="Wang A.H."/>
            <person name="Wang X."/>
            <person name="Wang Z.-Y."/>
            <person name="Wassarman D.A."/>
            <person name="Weinstock G.M."/>
            <person name="Weissenbach J."/>
            <person name="Williams S.M."/>
            <person name="Woodage T."/>
            <person name="Worley K.C."/>
            <person name="Wu D."/>
            <person name="Yang S."/>
            <person name="Yao Q.A."/>
            <person name="Ye J."/>
            <person name="Yeh R.-F."/>
            <person name="Zaveri J.S."/>
            <person name="Zhan M."/>
            <person name="Zhang G."/>
            <person name="Zhao Q."/>
            <person name="Zheng L."/>
            <person name="Zheng X.H."/>
            <person name="Zhong F.N."/>
            <person name="Zhong W."/>
            <person name="Zhou X."/>
            <person name="Zhu S.C."/>
            <person name="Zhu X."/>
            <person name="Smith H.O."/>
            <person name="Gibbs R.A."/>
            <person name="Myers E.W."/>
            <person name="Rubin G.M."/>
            <person name="Venter J.C."/>
        </authorList>
    </citation>
    <scope>NUCLEOTIDE SEQUENCE [LARGE SCALE GENOMIC DNA]</scope>
    <source>
        <strain>Berkeley</strain>
    </source>
</reference>
<reference key="2">
    <citation type="journal article" date="2002" name="Genome Biol.">
        <title>Annotation of the Drosophila melanogaster euchromatic genome: a systematic review.</title>
        <authorList>
            <person name="Misra S."/>
            <person name="Crosby M.A."/>
            <person name="Mungall C.J."/>
            <person name="Matthews B.B."/>
            <person name="Campbell K.S."/>
            <person name="Hradecky P."/>
            <person name="Huang Y."/>
            <person name="Kaminker J.S."/>
            <person name="Millburn G.H."/>
            <person name="Prochnik S.E."/>
            <person name="Smith C.D."/>
            <person name="Tupy J.L."/>
            <person name="Whitfield E.J."/>
            <person name="Bayraktaroglu L."/>
            <person name="Berman B.P."/>
            <person name="Bettencourt B.R."/>
            <person name="Celniker S.E."/>
            <person name="de Grey A.D.N.J."/>
            <person name="Drysdale R.A."/>
            <person name="Harris N.L."/>
            <person name="Richter J."/>
            <person name="Russo S."/>
            <person name="Schroeder A.J."/>
            <person name="Shu S.Q."/>
            <person name="Stapleton M."/>
            <person name="Yamada C."/>
            <person name="Ashburner M."/>
            <person name="Gelbart W.M."/>
            <person name="Rubin G.M."/>
            <person name="Lewis S.E."/>
        </authorList>
    </citation>
    <scope>GENOME REANNOTATION</scope>
    <source>
        <strain>Berkeley</strain>
    </source>
</reference>
<reference key="3">
    <citation type="journal article" date="2011" name="PLoS ONE">
        <title>Modeling peripheral olfactory coding in Drosophila larvae.</title>
        <authorList>
            <person name="Hoare D.J."/>
            <person name="Humble J."/>
            <person name="Jin D."/>
            <person name="Gilding N."/>
            <person name="Petersen R."/>
            <person name="Cobb M."/>
            <person name="McCrohan C."/>
        </authorList>
    </citation>
    <scope>FUNCTION</scope>
</reference>
<keyword id="KW-1003">Cell membrane</keyword>
<keyword id="KW-0325">Glycoprotein</keyword>
<keyword id="KW-0472">Membrane</keyword>
<keyword id="KW-0552">Olfaction</keyword>
<keyword id="KW-0675">Receptor</keyword>
<keyword id="KW-1185">Reference proteome</keyword>
<keyword id="KW-0716">Sensory transduction</keyword>
<keyword id="KW-0807">Transducer</keyword>
<keyword id="KW-0812">Transmembrane</keyword>
<keyword id="KW-1133">Transmembrane helix</keyword>
<accession>Q9VZW8</accession>
<feature type="chain" id="PRO_0000174258" description="Odorant receptor 63a">
    <location>
        <begin position="1"/>
        <end position="420"/>
    </location>
</feature>
<feature type="topological domain" description="Cytoplasmic" evidence="2">
    <location>
        <begin position="1"/>
        <end position="43"/>
    </location>
</feature>
<feature type="transmembrane region" description="Helical; Name=1" evidence="2">
    <location>
        <begin position="44"/>
        <end position="64"/>
    </location>
</feature>
<feature type="topological domain" description="Extracellular" evidence="2">
    <location>
        <begin position="65"/>
        <end position="76"/>
    </location>
</feature>
<feature type="transmembrane region" description="Helical; Name=2" evidence="2">
    <location>
        <begin position="77"/>
        <end position="97"/>
    </location>
</feature>
<feature type="topological domain" description="Cytoplasmic" evidence="2">
    <location>
        <begin position="98"/>
        <end position="150"/>
    </location>
</feature>
<feature type="transmembrane region" description="Helical; Name=3" evidence="2">
    <location>
        <begin position="151"/>
        <end position="171"/>
    </location>
</feature>
<feature type="topological domain" description="Extracellular" evidence="2">
    <location>
        <begin position="172"/>
        <end position="217"/>
    </location>
</feature>
<feature type="transmembrane region" description="Helical; Name=4" evidence="2">
    <location>
        <begin position="218"/>
        <end position="238"/>
    </location>
</feature>
<feature type="topological domain" description="Cytoplasmic" evidence="2">
    <location>
        <begin position="239"/>
        <end position="296"/>
    </location>
</feature>
<feature type="transmembrane region" description="Helical; Name=5" evidence="2">
    <location>
        <begin position="297"/>
        <end position="317"/>
    </location>
</feature>
<feature type="topological domain" description="Extracellular" evidence="2">
    <location>
        <begin position="318"/>
        <end position="320"/>
    </location>
</feature>
<feature type="transmembrane region" description="Helical; Name=6" evidence="2">
    <location>
        <begin position="321"/>
        <end position="341"/>
    </location>
</feature>
<feature type="topological domain" description="Cytoplasmic" evidence="2">
    <location>
        <begin position="342"/>
        <end position="387"/>
    </location>
</feature>
<feature type="transmembrane region" description="Helical; Name=7" evidence="2">
    <location>
        <begin position="388"/>
        <end position="408"/>
    </location>
</feature>
<feature type="topological domain" description="Extracellular" evidence="2">
    <location>
        <begin position="409"/>
        <end position="420"/>
    </location>
</feature>
<feature type="glycosylation site" description="N-linked (GlcNAc...) asparagine" evidence="2">
    <location>
        <position position="318"/>
    </location>
</feature>
<evidence type="ECO:0000250" key="1"/>
<evidence type="ECO:0000255" key="2"/>
<evidence type="ECO:0000269" key="3">
    <source>
    </source>
</evidence>
<evidence type="ECO:0000305" key="4"/>
<name>OR63A_DROME</name>
<comment type="function">
    <text evidence="3">Odorant receptor which mediates acceptance or avoidance behavior, depending on its substrates. The odorant receptor repertoire encodes a large collection of odor stimuli that vary widely in identity, intensity, and duration. May form a complex with Orco to form odorant-sensing units, providing sensitive and prolonged odorant signaling and calcium permeability. Involved in the behavioral responses to butyl acetate, isoamyl acetate, and hexanoic acid.</text>
</comment>
<comment type="subunit">
    <text evidence="1">Interacts with Orco. Complexes exist early in the endomembrane system in olfactory sensory neurons (OSNs), coupling these complexes to the conserved ciliary trafficking pathway (By similarity).</text>
</comment>
<comment type="subcellular location">
    <subcellularLocation>
        <location evidence="1">Cell membrane</location>
        <topology evidence="1">Multi-pass membrane protein</topology>
    </subcellularLocation>
</comment>
<comment type="miscellaneous">
    <text>The atypical heteromeric and topological design of the odorant receptors appears to be an insect-specific solution for odor recognition, making the OR/Orco complex an attractive target for the development of highly selective insect repellents to disrupt olfactory-mediated host-seeking behaviors of insect disease vectors. Odor-evoked OR currents are independent of known G-protein-coupled second messenger pathways.</text>
</comment>
<comment type="similarity">
    <text evidence="4">Belongs to the insect chemoreceptor superfamily. Heteromeric odorant receptor channel (TC 1.A.69) family. Or63a subfamily.</text>
</comment>